<organism>
    <name type="scientific">Borreliella burgdorferi (strain ATCC 35210 / DSM 4680 / CIP 102532 / B31)</name>
    <name type="common">Borrelia burgdorferi</name>
    <dbReference type="NCBI Taxonomy" id="224326"/>
    <lineage>
        <taxon>Bacteria</taxon>
        <taxon>Pseudomonadati</taxon>
        <taxon>Spirochaetota</taxon>
        <taxon>Spirochaetia</taxon>
        <taxon>Spirochaetales</taxon>
        <taxon>Borreliaceae</taxon>
        <taxon>Borreliella</taxon>
    </lineage>
</organism>
<comment type="cofactor">
    <cofactor evidence="1">
        <name>Zn(2+)</name>
        <dbReference type="ChEBI" id="CHEBI:29105"/>
    </cofactor>
</comment>
<comment type="similarity">
    <text evidence="3">Belongs to the peptidase M18 family.</text>
</comment>
<reference key="1">
    <citation type="journal article" date="1997" name="Nature">
        <title>Genomic sequence of a Lyme disease spirochaete, Borrelia burgdorferi.</title>
        <authorList>
            <person name="Fraser C.M."/>
            <person name="Casjens S."/>
            <person name="Huang W.M."/>
            <person name="Sutton G.G."/>
            <person name="Clayton R.A."/>
            <person name="Lathigra R."/>
            <person name="White O."/>
            <person name="Ketchum K.A."/>
            <person name="Dodson R.J."/>
            <person name="Hickey E.K."/>
            <person name="Gwinn M.L."/>
            <person name="Dougherty B.A."/>
            <person name="Tomb J.-F."/>
            <person name="Fleischmann R.D."/>
            <person name="Richardson D.L."/>
            <person name="Peterson J.D."/>
            <person name="Kerlavage A.R."/>
            <person name="Quackenbush J."/>
            <person name="Salzberg S.L."/>
            <person name="Hanson M."/>
            <person name="van Vugt R."/>
            <person name="Palmer N."/>
            <person name="Adams M.D."/>
            <person name="Gocayne J.D."/>
            <person name="Weidman J.F."/>
            <person name="Utterback T.R."/>
            <person name="Watthey L."/>
            <person name="McDonald L.A."/>
            <person name="Artiach P."/>
            <person name="Bowman C."/>
            <person name="Garland S.A."/>
            <person name="Fujii C."/>
            <person name="Cotton M.D."/>
            <person name="Horst K."/>
            <person name="Roberts K.M."/>
            <person name="Hatch B."/>
            <person name="Smith H.O."/>
            <person name="Venter J.C."/>
        </authorList>
    </citation>
    <scope>NUCLEOTIDE SEQUENCE [LARGE SCALE GENOMIC DNA]</scope>
    <source>
        <strain>ATCC 35210 / DSM 4680 / CIP 102532 / B31</strain>
    </source>
</reference>
<sequence length="458" mass="51500">MKKQNPWIYLNEEEKNQILNFSESYKKFISKFKTEREVTAYALDKAKKLGFINAEEKKNLMPGDKIFYTCREKSVAFAIIGKNPIEDGMNFIVSHTDSPRLDAKPSPISEENELTFIKTNYYGGIKKYQWLSTPLSIRGVVFLKNGEKVEINIGDNENDPVFVIPDILPHLDRKIQRNKKSDEIVEGENLKILIGSLPIETKEKNKVKLATLQLIKEKYKIEEEDFVSSEIEIVPAGTAKDVGFDKALIGAYGQDDKICVFTSLESIFDLEETPNKTAICFLVDKEEIGSTGSTGLDSRYLEYFVSDMIFKIKKSEYNNLHVQKALWNSKSISADVCAAINPLFSSVHDEQNAPQLGYGIPIMKYTGHGGKSMASDADAELVSYIRQLLNKNNIAWQVATLGKVEEGGGGTVAKFLAGYGIRTIDMGPAVISMHSPMEITSKFDLYNAYLAYKAFYRE</sequence>
<protein>
    <recommendedName>
        <fullName>Probable M18 family aminopeptidase 1</fullName>
        <ecNumber>3.4.11.-</ecNumber>
    </recommendedName>
</protein>
<gene>
    <name type="primary">apeA</name>
    <name type="ordered locus">BB_0366</name>
</gene>
<proteinExistence type="evidence at protein level"/>
<dbReference type="EC" id="3.4.11.-"/>
<dbReference type="EMBL" id="AE000783">
    <property type="protein sequence ID" value="AAC66747.1"/>
    <property type="molecule type" value="Genomic_DNA"/>
</dbReference>
<dbReference type="PIR" id="E70145">
    <property type="entry name" value="E70145"/>
</dbReference>
<dbReference type="RefSeq" id="NP_212500.1">
    <property type="nucleotide sequence ID" value="NC_001318.1"/>
</dbReference>
<dbReference type="RefSeq" id="WP_002657823.1">
    <property type="nucleotide sequence ID" value="NC_001318.1"/>
</dbReference>
<dbReference type="PDB" id="1Y7E">
    <property type="method" value="X-ray"/>
    <property type="resolution" value="3.20 A"/>
    <property type="chains" value="A=1-458"/>
</dbReference>
<dbReference type="PDBsum" id="1Y7E"/>
<dbReference type="SMR" id="P0C925"/>
<dbReference type="STRING" id="224326.BB_0366"/>
<dbReference type="PaxDb" id="224326-BB_0366"/>
<dbReference type="EnsemblBacteria" id="AAC66747">
    <property type="protein sequence ID" value="AAC66747"/>
    <property type="gene ID" value="BB_0366"/>
</dbReference>
<dbReference type="KEGG" id="bbu:BB_0366"/>
<dbReference type="PATRIC" id="fig|224326.49.peg.761"/>
<dbReference type="HOGENOM" id="CLU_590123_0_0_12"/>
<dbReference type="OrthoDB" id="89722at2"/>
<dbReference type="EvolutionaryTrace" id="P0C925"/>
<dbReference type="Proteomes" id="UP000001807">
    <property type="component" value="Chromosome"/>
</dbReference>
<dbReference type="GO" id="GO:0005829">
    <property type="term" value="C:cytosol"/>
    <property type="evidence" value="ECO:0000314"/>
    <property type="project" value="CAFA"/>
</dbReference>
<dbReference type="GO" id="GO:0016020">
    <property type="term" value="C:membrane"/>
    <property type="evidence" value="ECO:0000314"/>
    <property type="project" value="CAFA"/>
</dbReference>
<dbReference type="GO" id="GO:0004177">
    <property type="term" value="F:aminopeptidase activity"/>
    <property type="evidence" value="ECO:0007669"/>
    <property type="project" value="UniProtKB-UniRule"/>
</dbReference>
<dbReference type="GO" id="GO:0008237">
    <property type="term" value="F:metallopeptidase activity"/>
    <property type="evidence" value="ECO:0007669"/>
    <property type="project" value="UniProtKB-UniRule"/>
</dbReference>
<dbReference type="GO" id="GO:0008270">
    <property type="term" value="F:zinc ion binding"/>
    <property type="evidence" value="ECO:0007669"/>
    <property type="project" value="UniProtKB-UniRule"/>
</dbReference>
<dbReference type="GO" id="GO:0006508">
    <property type="term" value="P:proteolysis"/>
    <property type="evidence" value="ECO:0007669"/>
    <property type="project" value="UniProtKB-UniRule"/>
</dbReference>
<dbReference type="CDD" id="cd05659">
    <property type="entry name" value="M18_API"/>
    <property type="match status" value="1"/>
</dbReference>
<dbReference type="FunFam" id="2.30.250.10:FF:000006">
    <property type="entry name" value="Probable M18 family aminopeptidase 1"/>
    <property type="match status" value="1"/>
</dbReference>
<dbReference type="Gene3D" id="2.30.250.10">
    <property type="entry name" value="Aminopeptidase i, Domain 2"/>
    <property type="match status" value="1"/>
</dbReference>
<dbReference type="Gene3D" id="3.40.630.10">
    <property type="entry name" value="Zn peptidases"/>
    <property type="match status" value="1"/>
</dbReference>
<dbReference type="HAMAP" id="MF_00466">
    <property type="entry name" value="Aminopeptidase_M18_1"/>
    <property type="match status" value="1"/>
</dbReference>
<dbReference type="InterPro" id="IPR022983">
    <property type="entry name" value="M18_aminopeptidase_1"/>
</dbReference>
<dbReference type="InterPro" id="IPR001948">
    <property type="entry name" value="Peptidase_M18"/>
</dbReference>
<dbReference type="InterPro" id="IPR023358">
    <property type="entry name" value="Peptidase_M18_dom2"/>
</dbReference>
<dbReference type="NCBIfam" id="NF002600">
    <property type="entry name" value="PRK02256.1"/>
    <property type="match status" value="1"/>
</dbReference>
<dbReference type="PANTHER" id="PTHR28570">
    <property type="entry name" value="ASPARTYL AMINOPEPTIDASE"/>
    <property type="match status" value="1"/>
</dbReference>
<dbReference type="PANTHER" id="PTHR28570:SF2">
    <property type="entry name" value="M18 FAMILY AMINOPEPTIDASE 1-RELATED"/>
    <property type="match status" value="1"/>
</dbReference>
<dbReference type="Pfam" id="PF02127">
    <property type="entry name" value="Peptidase_M18"/>
    <property type="match status" value="1"/>
</dbReference>
<dbReference type="PRINTS" id="PR00932">
    <property type="entry name" value="AMINO1PTASE"/>
</dbReference>
<dbReference type="SUPFAM" id="SSF101821">
    <property type="entry name" value="Aminopeptidase/glucanase lid domain"/>
    <property type="match status" value="1"/>
</dbReference>
<dbReference type="SUPFAM" id="SSF53187">
    <property type="entry name" value="Zn-dependent exopeptidases"/>
    <property type="match status" value="1"/>
</dbReference>
<evidence type="ECO:0000250" key="1"/>
<evidence type="ECO:0000255" key="2"/>
<evidence type="ECO:0000305" key="3"/>
<evidence type="ECO:0007829" key="4">
    <source>
        <dbReference type="PDB" id="1Y7E"/>
    </source>
</evidence>
<name>APEA_BORBU</name>
<accession>P0C925</accession>
<accession>Q45055</accession>
<keyword id="KW-0002">3D-structure</keyword>
<keyword id="KW-0031">Aminopeptidase</keyword>
<keyword id="KW-0378">Hydrolase</keyword>
<keyword id="KW-0479">Metal-binding</keyword>
<keyword id="KW-0482">Metalloprotease</keyword>
<keyword id="KW-0645">Protease</keyword>
<keyword id="KW-1185">Reference proteome</keyword>
<keyword id="KW-0862">Zinc</keyword>
<feature type="chain" id="PRO_0000173456" description="Probable M18 family aminopeptidase 1">
    <location>
        <begin position="1"/>
        <end position="458"/>
    </location>
</feature>
<feature type="binding site" evidence="2">
    <location>
        <position position="95"/>
    </location>
    <ligand>
        <name>Zn(2+)</name>
        <dbReference type="ChEBI" id="CHEBI:29105"/>
    </ligand>
</feature>
<feature type="binding site" evidence="2">
    <location>
        <position position="170"/>
    </location>
    <ligand>
        <name>Zn(2+)</name>
        <dbReference type="ChEBI" id="CHEBI:29105"/>
    </ligand>
</feature>
<feature type="binding site" evidence="2">
    <location>
        <position position="434"/>
    </location>
    <ligand>
        <name>Zn(2+)</name>
        <dbReference type="ChEBI" id="CHEBI:29105"/>
    </ligand>
</feature>
<feature type="helix" evidence="4">
    <location>
        <begin position="6"/>
        <end position="9"/>
    </location>
</feature>
<feature type="helix" evidence="4">
    <location>
        <begin position="12"/>
        <end position="31"/>
    </location>
</feature>
<feature type="helix" evidence="4">
    <location>
        <begin position="35"/>
        <end position="47"/>
    </location>
</feature>
<feature type="turn" evidence="4">
    <location>
        <begin position="48"/>
        <end position="50"/>
    </location>
</feature>
<feature type="strand" evidence="4">
    <location>
        <begin position="52"/>
        <end position="54"/>
    </location>
</feature>
<feature type="strand" evidence="4">
    <location>
        <begin position="65"/>
        <end position="67"/>
    </location>
</feature>
<feature type="strand" evidence="4">
    <location>
        <begin position="71"/>
        <end position="73"/>
    </location>
</feature>
<feature type="helix" evidence="4">
    <location>
        <begin position="85"/>
        <end position="87"/>
    </location>
</feature>
<feature type="strand" evidence="4">
    <location>
        <begin position="109"/>
        <end position="111"/>
    </location>
</feature>
<feature type="strand" evidence="4">
    <location>
        <begin position="114"/>
        <end position="117"/>
    </location>
</feature>
<feature type="strand" evidence="4">
    <location>
        <begin position="122"/>
        <end position="124"/>
    </location>
</feature>
<feature type="helix" evidence="4">
    <location>
        <begin position="127"/>
        <end position="130"/>
    </location>
</feature>
<feature type="strand" evidence="4">
    <location>
        <begin position="135"/>
        <end position="142"/>
    </location>
</feature>
<feature type="strand" evidence="4">
    <location>
        <begin position="148"/>
        <end position="156"/>
    </location>
</feature>
<feature type="strand" evidence="4">
    <location>
        <begin position="192"/>
        <end position="195"/>
    </location>
</feature>
<feature type="strand" evidence="4">
    <location>
        <begin position="202"/>
        <end position="204"/>
    </location>
</feature>
<feature type="helix" evidence="4">
    <location>
        <begin position="206"/>
        <end position="219"/>
    </location>
</feature>
<feature type="turn" evidence="4">
    <location>
        <begin position="223"/>
        <end position="226"/>
    </location>
</feature>
<feature type="strand" evidence="4">
    <location>
        <begin position="227"/>
        <end position="235"/>
    </location>
</feature>
<feature type="strand" evidence="4">
    <location>
        <begin position="240"/>
        <end position="242"/>
    </location>
</feature>
<feature type="turn" evidence="4">
    <location>
        <begin position="243"/>
        <end position="246"/>
    </location>
</feature>
<feature type="strand" evidence="4">
    <location>
        <begin position="248"/>
        <end position="253"/>
    </location>
</feature>
<feature type="helix" evidence="4">
    <location>
        <begin position="254"/>
        <end position="267"/>
    </location>
</feature>
<feature type="strand" evidence="4">
    <location>
        <begin position="268"/>
        <end position="271"/>
    </location>
</feature>
<feature type="helix" evidence="4">
    <location>
        <begin position="300"/>
        <end position="312"/>
    </location>
</feature>
<feature type="helix" evidence="4">
    <location>
        <begin position="320"/>
        <end position="328"/>
    </location>
</feature>
<feature type="strand" evidence="4">
    <location>
        <begin position="330"/>
        <end position="333"/>
    </location>
</feature>
<feature type="strand" evidence="4">
    <location>
        <begin position="360"/>
        <end position="365"/>
    </location>
</feature>
<feature type="helix" evidence="4">
    <location>
        <begin position="379"/>
        <end position="392"/>
    </location>
</feature>
<feature type="strand" evidence="4">
    <location>
        <begin position="396"/>
        <end position="401"/>
    </location>
</feature>
<feature type="helix" evidence="4">
    <location>
        <begin position="410"/>
        <end position="416"/>
    </location>
</feature>
<feature type="helix" evidence="4">
    <location>
        <begin position="417"/>
        <end position="419"/>
    </location>
</feature>
<feature type="strand" evidence="4">
    <location>
        <begin position="422"/>
        <end position="426"/>
    </location>
</feature>
<feature type="strand" evidence="4">
    <location>
        <begin position="429"/>
        <end position="432"/>
    </location>
</feature>
<feature type="strand" evidence="4">
    <location>
        <begin position="435"/>
        <end position="441"/>
    </location>
</feature>
<feature type="helix" evidence="4">
    <location>
        <begin position="442"/>
        <end position="454"/>
    </location>
</feature>
<feature type="turn" evidence="4">
    <location>
        <begin position="455"/>
        <end position="457"/>
    </location>
</feature>